<accession>B1IUR3</accession>
<comment type="function">
    <text evidence="1">Binds directly to 23S rRNA. The L1 stalk is quite mobile in the ribosome, and is involved in E site tRNA release.</text>
</comment>
<comment type="function">
    <text evidence="1">Protein L1 is also a translational repressor protein, it controls the translation of the L11 operon by binding to its mRNA.</text>
</comment>
<comment type="subunit">
    <text evidence="1">Part of the 50S ribosomal subunit.</text>
</comment>
<comment type="similarity">
    <text evidence="1">Belongs to the universal ribosomal protein uL1 family.</text>
</comment>
<feature type="chain" id="PRO_1000086284" description="Large ribosomal subunit protein uL1">
    <location>
        <begin position="1"/>
        <end position="234"/>
    </location>
</feature>
<evidence type="ECO:0000255" key="1">
    <source>
        <dbReference type="HAMAP-Rule" id="MF_01318"/>
    </source>
</evidence>
<evidence type="ECO:0000305" key="2"/>
<keyword id="KW-0678">Repressor</keyword>
<keyword id="KW-0687">Ribonucleoprotein</keyword>
<keyword id="KW-0689">Ribosomal protein</keyword>
<keyword id="KW-0694">RNA-binding</keyword>
<keyword id="KW-0699">rRNA-binding</keyword>
<keyword id="KW-0810">Translation regulation</keyword>
<keyword id="KW-0820">tRNA-binding</keyword>
<reference key="1">
    <citation type="submission" date="2008-02" db="EMBL/GenBank/DDBJ databases">
        <title>Complete sequence of Escherichia coli C str. ATCC 8739.</title>
        <authorList>
            <person name="Copeland A."/>
            <person name="Lucas S."/>
            <person name="Lapidus A."/>
            <person name="Glavina del Rio T."/>
            <person name="Dalin E."/>
            <person name="Tice H."/>
            <person name="Bruce D."/>
            <person name="Goodwin L."/>
            <person name="Pitluck S."/>
            <person name="Kiss H."/>
            <person name="Brettin T."/>
            <person name="Detter J.C."/>
            <person name="Han C."/>
            <person name="Kuske C.R."/>
            <person name="Schmutz J."/>
            <person name="Larimer F."/>
            <person name="Land M."/>
            <person name="Hauser L."/>
            <person name="Kyrpides N."/>
            <person name="Mikhailova N."/>
            <person name="Ingram L."/>
            <person name="Richardson P."/>
        </authorList>
    </citation>
    <scope>NUCLEOTIDE SEQUENCE [LARGE SCALE GENOMIC DNA]</scope>
    <source>
        <strain>ATCC 8739 / DSM 1576 / NBRC 3972 / NCIMB 8545 / WDCM 00012 / Crooks</strain>
    </source>
</reference>
<proteinExistence type="inferred from homology"/>
<gene>
    <name evidence="1" type="primary">rplA</name>
    <name type="ordered locus">EcolC_4041</name>
</gene>
<protein>
    <recommendedName>
        <fullName evidence="1">Large ribosomal subunit protein uL1</fullName>
    </recommendedName>
    <alternativeName>
        <fullName evidence="2">50S ribosomal protein L1</fullName>
    </alternativeName>
</protein>
<organism>
    <name type="scientific">Escherichia coli (strain ATCC 8739 / DSM 1576 / NBRC 3972 / NCIMB 8545 / WDCM 00012 / Crooks)</name>
    <dbReference type="NCBI Taxonomy" id="481805"/>
    <lineage>
        <taxon>Bacteria</taxon>
        <taxon>Pseudomonadati</taxon>
        <taxon>Pseudomonadota</taxon>
        <taxon>Gammaproteobacteria</taxon>
        <taxon>Enterobacterales</taxon>
        <taxon>Enterobacteriaceae</taxon>
        <taxon>Escherichia</taxon>
    </lineage>
</organism>
<name>RL1_ECOLC</name>
<dbReference type="EMBL" id="CP000946">
    <property type="protein sequence ID" value="ACA79640.1"/>
    <property type="molecule type" value="Genomic_DNA"/>
</dbReference>
<dbReference type="RefSeq" id="WP_001096684.1">
    <property type="nucleotide sequence ID" value="NZ_MTFT01000025.1"/>
</dbReference>
<dbReference type="SMR" id="B1IUR3"/>
<dbReference type="GeneID" id="93777910"/>
<dbReference type="KEGG" id="ecl:EcolC_4041"/>
<dbReference type="HOGENOM" id="CLU_062853_0_0_6"/>
<dbReference type="GO" id="GO:0022625">
    <property type="term" value="C:cytosolic large ribosomal subunit"/>
    <property type="evidence" value="ECO:0007669"/>
    <property type="project" value="TreeGrafter"/>
</dbReference>
<dbReference type="GO" id="GO:0019843">
    <property type="term" value="F:rRNA binding"/>
    <property type="evidence" value="ECO:0007669"/>
    <property type="project" value="UniProtKB-UniRule"/>
</dbReference>
<dbReference type="GO" id="GO:0003735">
    <property type="term" value="F:structural constituent of ribosome"/>
    <property type="evidence" value="ECO:0007669"/>
    <property type="project" value="InterPro"/>
</dbReference>
<dbReference type="GO" id="GO:0000049">
    <property type="term" value="F:tRNA binding"/>
    <property type="evidence" value="ECO:0007669"/>
    <property type="project" value="UniProtKB-KW"/>
</dbReference>
<dbReference type="GO" id="GO:0006417">
    <property type="term" value="P:regulation of translation"/>
    <property type="evidence" value="ECO:0007669"/>
    <property type="project" value="UniProtKB-KW"/>
</dbReference>
<dbReference type="GO" id="GO:0006412">
    <property type="term" value="P:translation"/>
    <property type="evidence" value="ECO:0007669"/>
    <property type="project" value="UniProtKB-UniRule"/>
</dbReference>
<dbReference type="CDD" id="cd00403">
    <property type="entry name" value="Ribosomal_L1"/>
    <property type="match status" value="1"/>
</dbReference>
<dbReference type="FunFam" id="3.40.50.790:FF:000001">
    <property type="entry name" value="50S ribosomal protein L1"/>
    <property type="match status" value="1"/>
</dbReference>
<dbReference type="Gene3D" id="3.30.190.20">
    <property type="match status" value="1"/>
</dbReference>
<dbReference type="Gene3D" id="3.40.50.790">
    <property type="match status" value="1"/>
</dbReference>
<dbReference type="HAMAP" id="MF_01318_B">
    <property type="entry name" value="Ribosomal_uL1_B"/>
    <property type="match status" value="1"/>
</dbReference>
<dbReference type="InterPro" id="IPR005878">
    <property type="entry name" value="Ribosom_uL1_bac-type"/>
</dbReference>
<dbReference type="InterPro" id="IPR002143">
    <property type="entry name" value="Ribosomal_uL1"/>
</dbReference>
<dbReference type="InterPro" id="IPR023674">
    <property type="entry name" value="Ribosomal_uL1-like"/>
</dbReference>
<dbReference type="InterPro" id="IPR028364">
    <property type="entry name" value="Ribosomal_uL1/biogenesis"/>
</dbReference>
<dbReference type="InterPro" id="IPR016095">
    <property type="entry name" value="Ribosomal_uL1_3-a/b-sand"/>
</dbReference>
<dbReference type="InterPro" id="IPR023673">
    <property type="entry name" value="Ribosomal_uL1_CS"/>
</dbReference>
<dbReference type="NCBIfam" id="TIGR01169">
    <property type="entry name" value="rplA_bact"/>
    <property type="match status" value="1"/>
</dbReference>
<dbReference type="PANTHER" id="PTHR36427">
    <property type="entry name" value="54S RIBOSOMAL PROTEIN L1, MITOCHONDRIAL"/>
    <property type="match status" value="1"/>
</dbReference>
<dbReference type="PANTHER" id="PTHR36427:SF3">
    <property type="entry name" value="LARGE RIBOSOMAL SUBUNIT PROTEIN UL1M"/>
    <property type="match status" value="1"/>
</dbReference>
<dbReference type="Pfam" id="PF00687">
    <property type="entry name" value="Ribosomal_L1"/>
    <property type="match status" value="1"/>
</dbReference>
<dbReference type="PIRSF" id="PIRSF002155">
    <property type="entry name" value="Ribosomal_L1"/>
    <property type="match status" value="1"/>
</dbReference>
<dbReference type="SUPFAM" id="SSF56808">
    <property type="entry name" value="Ribosomal protein L1"/>
    <property type="match status" value="1"/>
</dbReference>
<dbReference type="PROSITE" id="PS01199">
    <property type="entry name" value="RIBOSOMAL_L1"/>
    <property type="match status" value="1"/>
</dbReference>
<sequence>MAKLTKRMRVIREKVDATKQYDINEAIALLKELATAKFVESVDVAVNLGIDARKSDQNVRGATVLPHGTGRSVRVAVFTQGANAEAAKAAGAELVGMEDLADQIKKGEMNFDVVIASPDAMRVVGQLGQVLGPRGLMPNPKVGTVTPNVAEAVKNAKAGQVRYRNDKNGIIHTTIGKVDFDADKLKENLEALLVALKKAKPTQAKGVYIKKVSISTTMGAGVAVDQAGLSASVN</sequence>